<comment type="function">
    <text evidence="3">Required, together with mating-type protein A-2, for efficient ascospore formation.</text>
</comment>
<comment type="subcellular location">
    <subcellularLocation>
        <location evidence="1">Nucleus</location>
    </subcellularLocation>
</comment>
<comment type="developmental stage">
    <text evidence="2">Only present in A-cells and in a/A diploid cells.</text>
</comment>
<dbReference type="EMBL" id="M33876">
    <property type="protein sequence ID" value="AAC37476.1"/>
    <property type="molecule type" value="Genomic_DNA"/>
</dbReference>
<dbReference type="EMBL" id="CM002236">
    <property type="protein sequence ID" value="EAA35088.1"/>
    <property type="molecule type" value="Genomic_DNA"/>
</dbReference>
<dbReference type="PIR" id="S65584">
    <property type="entry name" value="S65584"/>
</dbReference>
<dbReference type="SMR" id="Q10116"/>
<dbReference type="STRING" id="367110.Q10116"/>
<dbReference type="PaxDb" id="5141-EFNCRP00000001043"/>
<dbReference type="EnsemblFungi" id="EAA35088">
    <property type="protein sequence ID" value="EAA35088"/>
    <property type="gene ID" value="NCU01960"/>
</dbReference>
<dbReference type="KEGG" id="ncr:NCU01960"/>
<dbReference type="VEuPathDB" id="FungiDB:NCU01960"/>
<dbReference type="HOGENOM" id="CLU_858146_0_0_1"/>
<dbReference type="InParanoid" id="Q10116"/>
<dbReference type="OrthoDB" id="6247875at2759"/>
<dbReference type="Proteomes" id="UP000001805">
    <property type="component" value="Chromosome 1, Linkage Group I"/>
</dbReference>
<dbReference type="GO" id="GO:0005634">
    <property type="term" value="C:nucleus"/>
    <property type="evidence" value="ECO:0007669"/>
    <property type="project" value="UniProtKB-SubCell"/>
</dbReference>
<dbReference type="GO" id="GO:0003677">
    <property type="term" value="F:DNA binding"/>
    <property type="evidence" value="ECO:0007669"/>
    <property type="project" value="UniProtKB-KW"/>
</dbReference>
<dbReference type="Gene3D" id="1.10.30.10">
    <property type="entry name" value="High mobility group box domain"/>
    <property type="match status" value="1"/>
</dbReference>
<dbReference type="InterPro" id="IPR009071">
    <property type="entry name" value="HMG_box_dom"/>
</dbReference>
<dbReference type="InterPro" id="IPR036910">
    <property type="entry name" value="HMG_box_dom_sf"/>
</dbReference>
<dbReference type="Pfam" id="PF00505">
    <property type="entry name" value="HMG_box"/>
    <property type="match status" value="1"/>
</dbReference>
<dbReference type="SMART" id="SM00398">
    <property type="entry name" value="HMG"/>
    <property type="match status" value="1"/>
</dbReference>
<dbReference type="SUPFAM" id="SSF47095">
    <property type="entry name" value="HMG-box"/>
    <property type="match status" value="1"/>
</dbReference>
<dbReference type="PROSITE" id="PS50118">
    <property type="entry name" value="HMG_BOX_2"/>
    <property type="match status" value="1"/>
</dbReference>
<keyword id="KW-0238">DNA-binding</keyword>
<keyword id="KW-0539">Nucleus</keyword>
<keyword id="KW-1185">Reference proteome</keyword>
<keyword id="KW-0804">Transcription</keyword>
<keyword id="KW-0805">Transcription regulation</keyword>
<name>MATD_NEUCR</name>
<protein>
    <recommendedName>
        <fullName>Mating-type protein A-3</fullName>
        <shortName>Mt A-3</shortName>
    </recommendedName>
</protein>
<accession>Q10116</accession>
<accession>Q7SE98</accession>
<reference key="1">
    <citation type="journal article" date="1996" name="Mol. Gen. Genet.">
        <title>Transcriptional analysis of the mtA idiomorph of Neurospora crassa identifies two genes in addition to mtA-1.</title>
        <authorList>
            <person name="Ferreira A.V.-B."/>
            <person name="Saupe S."/>
            <person name="Glass N.L."/>
        </authorList>
    </citation>
    <scope>NUCLEOTIDE SEQUENCE [GENOMIC DNA]</scope>
    <scope>DEVELOPMENTAL STAGE</scope>
    <source>
        <strain>ATCC 24698 / 74-OR23-1A / CBS 708.71 / DSM 1257 / FGSC 987</strain>
    </source>
</reference>
<reference key="2">
    <citation type="journal article" date="2003" name="Nature">
        <title>The genome sequence of the filamentous fungus Neurospora crassa.</title>
        <authorList>
            <person name="Galagan J.E."/>
            <person name="Calvo S.E."/>
            <person name="Borkovich K.A."/>
            <person name="Selker E.U."/>
            <person name="Read N.D."/>
            <person name="Jaffe D.B."/>
            <person name="FitzHugh W."/>
            <person name="Ma L.-J."/>
            <person name="Smirnov S."/>
            <person name="Purcell S."/>
            <person name="Rehman B."/>
            <person name="Elkins T."/>
            <person name="Engels R."/>
            <person name="Wang S."/>
            <person name="Nielsen C.B."/>
            <person name="Butler J."/>
            <person name="Endrizzi M."/>
            <person name="Qui D."/>
            <person name="Ianakiev P."/>
            <person name="Bell-Pedersen D."/>
            <person name="Nelson M.A."/>
            <person name="Werner-Washburne M."/>
            <person name="Selitrennikoff C.P."/>
            <person name="Kinsey J.A."/>
            <person name="Braun E.L."/>
            <person name="Zelter A."/>
            <person name="Schulte U."/>
            <person name="Kothe G.O."/>
            <person name="Jedd G."/>
            <person name="Mewes H.-W."/>
            <person name="Staben C."/>
            <person name="Marcotte E."/>
            <person name="Greenberg D."/>
            <person name="Roy A."/>
            <person name="Foley K."/>
            <person name="Naylor J."/>
            <person name="Stange-Thomann N."/>
            <person name="Barrett R."/>
            <person name="Gnerre S."/>
            <person name="Kamal M."/>
            <person name="Kamvysselis M."/>
            <person name="Mauceli E.W."/>
            <person name="Bielke C."/>
            <person name="Rudd S."/>
            <person name="Frishman D."/>
            <person name="Krystofova S."/>
            <person name="Rasmussen C."/>
            <person name="Metzenberg R.L."/>
            <person name="Perkins D.D."/>
            <person name="Kroken S."/>
            <person name="Cogoni C."/>
            <person name="Macino G."/>
            <person name="Catcheside D.E.A."/>
            <person name="Li W."/>
            <person name="Pratt R.J."/>
            <person name="Osmani S.A."/>
            <person name="DeSouza C.P.C."/>
            <person name="Glass N.L."/>
            <person name="Orbach M.J."/>
            <person name="Berglund J.A."/>
            <person name="Voelker R."/>
            <person name="Yarden O."/>
            <person name="Plamann M."/>
            <person name="Seiler S."/>
            <person name="Dunlap J.C."/>
            <person name="Radford A."/>
            <person name="Aramayo R."/>
            <person name="Natvig D.O."/>
            <person name="Alex L.A."/>
            <person name="Mannhaupt G."/>
            <person name="Ebbole D.J."/>
            <person name="Freitag M."/>
            <person name="Paulsen I."/>
            <person name="Sachs M.S."/>
            <person name="Lander E.S."/>
            <person name="Nusbaum C."/>
            <person name="Birren B.W."/>
        </authorList>
    </citation>
    <scope>NUCLEOTIDE SEQUENCE [LARGE SCALE GENOMIC DNA]</scope>
    <source>
        <strain>ATCC 24698 / 74-OR23-1A / CBS 708.71 / DSM 1257 / FGSC 987</strain>
    </source>
</reference>
<reference key="3">
    <citation type="journal article" date="1998" name="Genetics">
        <title>Characterization of mat A-2, mat A-3 and deltamatA mating-type mutants of Neurospora crassa.</title>
        <authorList>
            <person name="Ferreira A.V.-B."/>
            <person name="An Z."/>
            <person name="Metzenberg R.L."/>
            <person name="Glass N.L."/>
        </authorList>
    </citation>
    <scope>FUNCTION</scope>
</reference>
<organism>
    <name type="scientific">Neurospora crassa (strain ATCC 24698 / 74-OR23-1A / CBS 708.71 / DSM 1257 / FGSC 987)</name>
    <dbReference type="NCBI Taxonomy" id="367110"/>
    <lineage>
        <taxon>Eukaryota</taxon>
        <taxon>Fungi</taxon>
        <taxon>Dikarya</taxon>
        <taxon>Ascomycota</taxon>
        <taxon>Pezizomycotina</taxon>
        <taxon>Sordariomycetes</taxon>
        <taxon>Sordariomycetidae</taxon>
        <taxon>Sordariales</taxon>
        <taxon>Sordariaceae</taxon>
        <taxon>Neurospora</taxon>
    </lineage>
</organism>
<sequence length="324" mass="36539">MSALDVDSISDIAPGLSPVTAIHYGRIQVMLFRSHLAEFAEEDLVYAMDNSVVVFGEEALLMVAPDESSIAICTYPFGLMMMEWGNWDILAVSPPSRTPTIPSESVLGISNQGGANVEQQEQSSHTIDMTLPSNFFEQSSVTQSNGTSRPRNQFVLYYQWLLDTLFSEDPSLSARNISQIVAGLWNSEHPAAKARFRELAEMEVHRHRAENPHLYPDQPRFPTTDPVPPRMRYPCVISPEDRQRILRMLDFVWEESNGQLAAEEAALNDVVQPQQAEEVGPFPDFEWEEPNHIIDMSTDLSVAQDPDFMMTEDDSMRFLLKQAS</sequence>
<proteinExistence type="evidence at transcript level"/>
<gene>
    <name type="primary">mtA-3</name>
    <name type="ORF">NCU01960</name>
</gene>
<feature type="chain" id="PRO_0000048589" description="Mating-type protein A-3">
    <location>
        <begin position="1"/>
        <end position="324"/>
    </location>
</feature>
<feature type="DNA-binding region" description="HMG box" evidence="1">
    <location>
        <begin position="147"/>
        <end position="215"/>
    </location>
</feature>
<evidence type="ECO:0000255" key="1">
    <source>
        <dbReference type="PROSITE-ProRule" id="PRU00267"/>
    </source>
</evidence>
<evidence type="ECO:0000269" key="2">
    <source>
    </source>
</evidence>
<evidence type="ECO:0000269" key="3">
    <source>
    </source>
</evidence>